<keyword id="KW-0002">3D-structure</keyword>
<keyword id="KW-0067">ATP-binding</keyword>
<keyword id="KW-0131">Cell cycle</keyword>
<keyword id="KW-0132">Cell division</keyword>
<keyword id="KW-0997">Cell inner membrane</keyword>
<keyword id="KW-1003">Cell membrane</keyword>
<keyword id="KW-0903">Direct protein sequencing</keyword>
<keyword id="KW-0472">Membrane</keyword>
<keyword id="KW-0547">Nucleotide-binding</keyword>
<keyword id="KW-1185">Reference proteome</keyword>
<keyword id="KW-0717">Septation</keyword>
<protein>
    <recommendedName>
        <fullName>Septum site-determining protein MinD</fullName>
    </recommendedName>
    <alternativeName>
        <fullName>Cell division inhibitor MinD</fullName>
    </alternativeName>
</protein>
<name>MIND_ECOLI</name>
<reference key="1">
    <citation type="journal article" date="1989" name="Cell">
        <title>A division inhibitor and a topological specificity factor coded for by the minicell locus determine proper placement of the division septum in E. coli.</title>
        <authorList>
            <person name="de Boer P.A.J."/>
            <person name="Crossley R.E."/>
            <person name="Rothfield L.I."/>
        </authorList>
    </citation>
    <scope>NUCLEOTIDE SEQUENCE [GENOMIC DNA]</scope>
</reference>
<reference key="2">
    <citation type="journal article" date="1996" name="DNA Res.">
        <title>A 718-kb DNA sequence of the Escherichia coli K-12 genome corresponding to the 12.7-28.0 min region on the linkage map.</title>
        <authorList>
            <person name="Oshima T."/>
            <person name="Aiba H."/>
            <person name="Baba T."/>
            <person name="Fujita K."/>
            <person name="Hayashi K."/>
            <person name="Honjo A."/>
            <person name="Ikemoto K."/>
            <person name="Inada T."/>
            <person name="Itoh T."/>
            <person name="Kajihara M."/>
            <person name="Kanai K."/>
            <person name="Kashimoto K."/>
            <person name="Kimura S."/>
            <person name="Kitagawa M."/>
            <person name="Makino K."/>
            <person name="Masuda S."/>
            <person name="Miki T."/>
            <person name="Mizobuchi K."/>
            <person name="Mori H."/>
            <person name="Motomura K."/>
            <person name="Nakamura Y."/>
            <person name="Nashimoto H."/>
            <person name="Nishio Y."/>
            <person name="Saito N."/>
            <person name="Sampei G."/>
            <person name="Seki Y."/>
            <person name="Tagami H."/>
            <person name="Takemoto K."/>
            <person name="Wada C."/>
            <person name="Yamamoto Y."/>
            <person name="Yano M."/>
            <person name="Horiuchi T."/>
        </authorList>
    </citation>
    <scope>NUCLEOTIDE SEQUENCE [LARGE SCALE GENOMIC DNA]</scope>
    <source>
        <strain>K12 / W3110 / ATCC 27325 / DSM 5911</strain>
    </source>
</reference>
<reference key="3">
    <citation type="journal article" date="1997" name="Science">
        <title>The complete genome sequence of Escherichia coli K-12.</title>
        <authorList>
            <person name="Blattner F.R."/>
            <person name="Plunkett G. III"/>
            <person name="Bloch C.A."/>
            <person name="Perna N.T."/>
            <person name="Burland V."/>
            <person name="Riley M."/>
            <person name="Collado-Vides J."/>
            <person name="Glasner J.D."/>
            <person name="Rode C.K."/>
            <person name="Mayhew G.F."/>
            <person name="Gregor J."/>
            <person name="Davis N.W."/>
            <person name="Kirkpatrick H.A."/>
            <person name="Goeden M.A."/>
            <person name="Rose D.J."/>
            <person name="Mau B."/>
            <person name="Shao Y."/>
        </authorList>
    </citation>
    <scope>NUCLEOTIDE SEQUENCE [LARGE SCALE GENOMIC DNA]</scope>
    <source>
        <strain>K12 / MG1655 / ATCC 47076</strain>
    </source>
</reference>
<reference key="4">
    <citation type="journal article" date="2006" name="Mol. Syst. Biol.">
        <title>Highly accurate genome sequences of Escherichia coli K-12 strains MG1655 and W3110.</title>
        <authorList>
            <person name="Hayashi K."/>
            <person name="Morooka N."/>
            <person name="Yamamoto Y."/>
            <person name="Fujita K."/>
            <person name="Isono K."/>
            <person name="Choi S."/>
            <person name="Ohtsubo E."/>
            <person name="Baba T."/>
            <person name="Wanner B.L."/>
            <person name="Mori H."/>
            <person name="Horiuchi T."/>
        </authorList>
    </citation>
    <scope>NUCLEOTIDE SEQUENCE [LARGE SCALE GENOMIC DNA]</scope>
    <source>
        <strain>K12 / W3110 / ATCC 27325 / DSM 5911</strain>
    </source>
</reference>
<reference key="5">
    <citation type="journal article" date="1997" name="Electrophoresis">
        <title>Comparing the predicted and observed properties of proteins encoded in the genome of Escherichia coli K-12.</title>
        <authorList>
            <person name="Link A.J."/>
            <person name="Robison K."/>
            <person name="Church G.M."/>
        </authorList>
    </citation>
    <scope>PROTEIN SEQUENCE OF 2-13</scope>
    <source>
        <strain>K12 / EMG2</strain>
    </source>
</reference>
<reference key="6">
    <citation type="journal article" date="1991" name="EMBO J.">
        <title>The MinD protein is a membrane ATPase required for the correct placement of the Escherichia coli division site.</title>
        <authorList>
            <person name="de Boer P.A.J."/>
            <person name="Crossley R.E."/>
            <person name="Hand A.R."/>
            <person name="Rothfield L.I."/>
        </authorList>
    </citation>
    <scope>FUNCTION</scope>
    <scope>MUTAGENESIS</scope>
</reference>
<reference key="7">
    <citation type="journal article" date="1999" name="Proc. Natl. Acad. Sci. U.S.A.">
        <title>Rapid pole-to-pole oscillation of a protein required for directing division to the middle of Escherichia coli.</title>
        <authorList>
            <person name="Raskin D.M."/>
            <person name="de Boer P.A.J."/>
        </authorList>
    </citation>
    <scope>CHARACTERIZATION</scope>
</reference>
<reference key="8">
    <citation type="journal article" date="2012" name="Mol. Microbiol.">
        <title>Isolation and identification of new inner membrane-associated proteins that localize to cell poles in Escherichia coli.</title>
        <authorList>
            <person name="Li G."/>
            <person name="Young K.D."/>
        </authorList>
    </citation>
    <scope>FUNCTION IN SUBCELLULAR LOCATION AT CELL POLES</scope>
    <scope>DISRUPTION PHENOTYPE</scope>
    <source>
        <strain>K12 / MG1655 / ATCC 47076</strain>
    </source>
</reference>
<gene>
    <name type="primary">minD</name>
    <name type="ordered locus">b1175</name>
    <name type="ordered locus">JW1164</name>
</gene>
<dbReference type="EMBL" id="J03153">
    <property type="protein sequence ID" value="AAB59062.1"/>
    <property type="molecule type" value="Genomic_DNA"/>
</dbReference>
<dbReference type="EMBL" id="U00096">
    <property type="protein sequence ID" value="AAC74259.1"/>
    <property type="molecule type" value="Genomic_DNA"/>
</dbReference>
<dbReference type="EMBL" id="AP009048">
    <property type="protein sequence ID" value="BAA36009.1"/>
    <property type="molecule type" value="Genomic_DNA"/>
</dbReference>
<dbReference type="PIR" id="B31877">
    <property type="entry name" value="CCECID"/>
</dbReference>
<dbReference type="RefSeq" id="NP_415693.1">
    <property type="nucleotide sequence ID" value="NC_000913.3"/>
</dbReference>
<dbReference type="RefSeq" id="WP_000101055.1">
    <property type="nucleotide sequence ID" value="NZ_STEB01000023.1"/>
</dbReference>
<dbReference type="PDB" id="3Q9L">
    <property type="method" value="X-ray"/>
    <property type="resolution" value="2.34 A"/>
    <property type="chains" value="A/B=1-260"/>
</dbReference>
<dbReference type="PDB" id="3R9I">
    <property type="method" value="X-ray"/>
    <property type="resolution" value="2.60 A"/>
    <property type="chains" value="A/B/C/D=1-260"/>
</dbReference>
<dbReference type="PDB" id="3R9J">
    <property type="method" value="X-ray"/>
    <property type="resolution" value="4.30 A"/>
    <property type="chains" value="A/B=1-260"/>
</dbReference>
<dbReference type="PDBsum" id="3Q9L"/>
<dbReference type="PDBsum" id="3R9I"/>
<dbReference type="PDBsum" id="3R9J"/>
<dbReference type="SMR" id="P0AEZ3"/>
<dbReference type="BioGRID" id="4262868">
    <property type="interactions" value="694"/>
</dbReference>
<dbReference type="BioGRID" id="850108">
    <property type="interactions" value="3"/>
</dbReference>
<dbReference type="DIP" id="DIP-35946N"/>
<dbReference type="FunCoup" id="P0AEZ3">
    <property type="interactions" value="706"/>
</dbReference>
<dbReference type="IntAct" id="P0AEZ3">
    <property type="interactions" value="15"/>
</dbReference>
<dbReference type="MINT" id="P0AEZ3"/>
<dbReference type="STRING" id="511145.b1175"/>
<dbReference type="jPOST" id="P0AEZ3"/>
<dbReference type="PaxDb" id="511145-b1175"/>
<dbReference type="EnsemblBacteria" id="AAC74259">
    <property type="protein sequence ID" value="AAC74259"/>
    <property type="gene ID" value="b1175"/>
</dbReference>
<dbReference type="GeneID" id="93776259"/>
<dbReference type="GeneID" id="945741"/>
<dbReference type="KEGG" id="ecj:JW1164"/>
<dbReference type="KEGG" id="eco:b1175"/>
<dbReference type="KEGG" id="ecoc:C3026_06925"/>
<dbReference type="PATRIC" id="fig|1411691.4.peg.1113"/>
<dbReference type="EchoBASE" id="EB0592"/>
<dbReference type="eggNOG" id="COG2894">
    <property type="taxonomic scope" value="Bacteria"/>
</dbReference>
<dbReference type="HOGENOM" id="CLU_037612_0_1_6"/>
<dbReference type="InParanoid" id="P0AEZ3"/>
<dbReference type="OMA" id="CESAKAY"/>
<dbReference type="OrthoDB" id="9773088at2"/>
<dbReference type="PhylomeDB" id="P0AEZ3"/>
<dbReference type="BioCyc" id="EcoCyc:EG10597-MONOMER"/>
<dbReference type="EvolutionaryTrace" id="P0AEZ3"/>
<dbReference type="PRO" id="PR:P0AEZ3"/>
<dbReference type="Proteomes" id="UP000000625">
    <property type="component" value="Chromosome"/>
</dbReference>
<dbReference type="GO" id="GO:0060187">
    <property type="term" value="C:cell pole"/>
    <property type="evidence" value="ECO:0000314"/>
    <property type="project" value="EcoCyc"/>
</dbReference>
<dbReference type="GO" id="GO:0009898">
    <property type="term" value="C:cytoplasmic side of plasma membrane"/>
    <property type="evidence" value="ECO:0000314"/>
    <property type="project" value="EcoCyc"/>
</dbReference>
<dbReference type="GO" id="GO:0005829">
    <property type="term" value="C:cytosol"/>
    <property type="evidence" value="ECO:0000314"/>
    <property type="project" value="EcoCyc"/>
</dbReference>
<dbReference type="GO" id="GO:0005886">
    <property type="term" value="C:plasma membrane"/>
    <property type="evidence" value="ECO:0000314"/>
    <property type="project" value="EcoCyc"/>
</dbReference>
<dbReference type="GO" id="GO:0005524">
    <property type="term" value="F:ATP binding"/>
    <property type="evidence" value="ECO:0000318"/>
    <property type="project" value="GO_Central"/>
</dbReference>
<dbReference type="GO" id="GO:0016887">
    <property type="term" value="F:ATP hydrolysis activity"/>
    <property type="evidence" value="ECO:0000314"/>
    <property type="project" value="EcoCyc"/>
</dbReference>
<dbReference type="GO" id="GO:0042802">
    <property type="term" value="F:identical protein binding"/>
    <property type="evidence" value="ECO:0000314"/>
    <property type="project" value="EcoCyc"/>
</dbReference>
<dbReference type="GO" id="GO:0051301">
    <property type="term" value="P:cell division"/>
    <property type="evidence" value="ECO:0000315"/>
    <property type="project" value="EcoCyc"/>
</dbReference>
<dbReference type="GO" id="GO:0007059">
    <property type="term" value="P:chromosome segregation"/>
    <property type="evidence" value="ECO:0000315"/>
    <property type="project" value="EcoCyc"/>
</dbReference>
<dbReference type="GO" id="GO:0000918">
    <property type="term" value="P:division septum site selection"/>
    <property type="evidence" value="ECO:0000314"/>
    <property type="project" value="EcoCyc"/>
</dbReference>
<dbReference type="GO" id="GO:0008298">
    <property type="term" value="P:intracellular mRNA localization"/>
    <property type="evidence" value="ECO:0000314"/>
    <property type="project" value="EcoCyc"/>
</dbReference>
<dbReference type="CDD" id="cd02036">
    <property type="entry name" value="MinD"/>
    <property type="match status" value="1"/>
</dbReference>
<dbReference type="FunFam" id="3.40.50.300:FF:000068">
    <property type="entry name" value="Site-determining protein"/>
    <property type="match status" value="1"/>
</dbReference>
<dbReference type="Gene3D" id="3.40.50.300">
    <property type="entry name" value="P-loop containing nucleotide triphosphate hydrolases"/>
    <property type="match status" value="1"/>
</dbReference>
<dbReference type="InterPro" id="IPR002586">
    <property type="entry name" value="CobQ/CobB/MinD/ParA_Nub-bd_dom"/>
</dbReference>
<dbReference type="InterPro" id="IPR010223">
    <property type="entry name" value="MinD"/>
</dbReference>
<dbReference type="InterPro" id="IPR025501">
    <property type="entry name" value="MinD_FleN"/>
</dbReference>
<dbReference type="InterPro" id="IPR027417">
    <property type="entry name" value="P-loop_NTPase"/>
</dbReference>
<dbReference type="InterPro" id="IPR050625">
    <property type="entry name" value="ParA/MinD_ATPase"/>
</dbReference>
<dbReference type="NCBIfam" id="TIGR01968">
    <property type="entry name" value="minD_bact"/>
    <property type="match status" value="1"/>
</dbReference>
<dbReference type="NCBIfam" id="NF008079">
    <property type="entry name" value="PRK10818.1"/>
    <property type="match status" value="1"/>
</dbReference>
<dbReference type="PANTHER" id="PTHR43384:SF6">
    <property type="entry name" value="SEPTUM SITE-DETERMINING PROTEIN MIND HOMOLOG, CHLOROPLASTIC"/>
    <property type="match status" value="1"/>
</dbReference>
<dbReference type="PANTHER" id="PTHR43384">
    <property type="entry name" value="SEPTUM SITE-DETERMINING PROTEIN MIND HOMOLOG, CHLOROPLASTIC-RELATED"/>
    <property type="match status" value="1"/>
</dbReference>
<dbReference type="Pfam" id="PF01656">
    <property type="entry name" value="CbiA"/>
    <property type="match status" value="1"/>
</dbReference>
<dbReference type="PIRSF" id="PIRSF003092">
    <property type="entry name" value="MinD"/>
    <property type="match status" value="1"/>
</dbReference>
<dbReference type="SUPFAM" id="SSF52540">
    <property type="entry name" value="P-loop containing nucleoside triphosphate hydrolases"/>
    <property type="match status" value="1"/>
</dbReference>
<comment type="function">
    <text evidence="2 3">ATPase required for the correct placement of the division site. Cell division inhibitors MinC and MinD act in concert to form an inhibitor capable of blocking formation of the polar Z ring septums. Rapidly oscillates between the poles of the cell to destabilize FtsZ filaments that have formed before they mature into polar Z rings.</text>
</comment>
<comment type="subunit">
    <text>Interacts with MinC and FtsZ.</text>
</comment>
<comment type="interaction">
    <interactant intactId="EBI-554545">
        <id>P0AEZ3</id>
    </interactant>
    <interactant intactId="EBI-554060">
        <id>P18196</id>
        <label>minC</label>
    </interactant>
    <organismsDiffer>false</organismsDiffer>
    <experiments>7</experiments>
</comment>
<comment type="interaction">
    <interactant intactId="EBI-554545">
        <id>P0AEZ3</id>
    </interactant>
    <interactant intactId="EBI-1118020">
        <id>P0A734</id>
        <label>minE</label>
    </interactant>
    <organismsDiffer>false</organismsDiffer>
    <experiments>4</experiments>
</comment>
<comment type="subcellular location">
    <subcellularLocation>
        <location>Cell inner membrane</location>
        <topology>Peripheral membrane protein</topology>
    </subcellularLocation>
</comment>
<comment type="disruption phenotype">
    <text evidence="3">In a minCDE operon disruption (minC-minD-minE), cells divide not only at midpoint but also at their poles, yielding small minicells and long rods. Loss of polar localization of several polar-localized proteins including GroEL-GroES, TnaA and YqjD.</text>
</comment>
<comment type="similarity">
    <text evidence="5">Belongs to the ParA family. MinD subfamily.</text>
</comment>
<proteinExistence type="evidence at protein level"/>
<accession>P0AEZ3</accession>
<accession>P18197</accession>
<evidence type="ECO:0000250" key="1">
    <source>
        <dbReference type="UniProtKB" id="Q72H90"/>
    </source>
</evidence>
<evidence type="ECO:0000269" key="2">
    <source>
    </source>
</evidence>
<evidence type="ECO:0000269" key="3">
    <source>
    </source>
</evidence>
<evidence type="ECO:0000269" key="4">
    <source>
    </source>
</evidence>
<evidence type="ECO:0000305" key="5"/>
<evidence type="ECO:0007829" key="6">
    <source>
        <dbReference type="PDB" id="3Q9L"/>
    </source>
</evidence>
<evidence type="ECO:0007829" key="7">
    <source>
        <dbReference type="PDB" id="3R9I"/>
    </source>
</evidence>
<organism>
    <name type="scientific">Escherichia coli (strain K12)</name>
    <dbReference type="NCBI Taxonomy" id="83333"/>
    <lineage>
        <taxon>Bacteria</taxon>
        <taxon>Pseudomonadati</taxon>
        <taxon>Pseudomonadota</taxon>
        <taxon>Gammaproteobacteria</taxon>
        <taxon>Enterobacterales</taxon>
        <taxon>Enterobacteriaceae</taxon>
        <taxon>Escherichia</taxon>
    </lineage>
</organism>
<feature type="initiator methionine" description="Removed" evidence="4">
    <location>
        <position position="1"/>
    </location>
</feature>
<feature type="chain" id="PRO_0000201968" description="Septum site-determining protein MinD">
    <location>
        <begin position="2"/>
        <end position="270"/>
    </location>
</feature>
<feature type="binding site" evidence="1">
    <location>
        <begin position="11"/>
        <end position="18"/>
    </location>
    <ligand>
        <name>ATP</name>
        <dbReference type="ChEBI" id="CHEBI:30616"/>
    </ligand>
</feature>
<feature type="mutagenesis site" description="Less effective then wild-type." evidence="2">
    <original>G</original>
    <variation>S</variation>
    <location>
        <position position="15"/>
    </location>
</feature>
<feature type="mutagenesis site" description="Loss of activity." evidence="2">
    <original>KT</original>
    <variation>QR</variation>
    <location>
        <begin position="16"/>
        <end position="17"/>
    </location>
</feature>
<feature type="mutagenesis site" description="Loss of activity." evidence="2">
    <original>K</original>
    <variation>Q</variation>
    <location>
        <position position="16"/>
    </location>
</feature>
<feature type="strand" evidence="6">
    <location>
        <begin position="3"/>
        <end position="8"/>
    </location>
</feature>
<feature type="strand" evidence="7">
    <location>
        <begin position="10"/>
        <end position="15"/>
    </location>
</feature>
<feature type="helix" evidence="6">
    <location>
        <begin position="16"/>
        <end position="29"/>
    </location>
</feature>
<feature type="strand" evidence="6">
    <location>
        <begin position="34"/>
        <end position="38"/>
    </location>
</feature>
<feature type="helix" evidence="6">
    <location>
        <begin position="46"/>
        <end position="49"/>
    </location>
</feature>
<feature type="helix" evidence="6">
    <location>
        <begin position="53"/>
        <end position="55"/>
    </location>
</feature>
<feature type="helix" evidence="6">
    <location>
        <begin position="60"/>
        <end position="64"/>
    </location>
</feature>
<feature type="helix" evidence="6">
    <location>
        <begin position="70"/>
        <end position="73"/>
    </location>
</feature>
<feature type="strand" evidence="6">
    <location>
        <begin position="78"/>
        <end position="80"/>
    </location>
</feature>
<feature type="strand" evidence="6">
    <location>
        <begin position="83"/>
        <end position="86"/>
    </location>
</feature>
<feature type="helix" evidence="6">
    <location>
        <begin position="99"/>
        <end position="111"/>
    </location>
</feature>
<feature type="strand" evidence="6">
    <location>
        <begin position="115"/>
        <end position="120"/>
    </location>
</feature>
<feature type="strand" evidence="6">
    <location>
        <begin position="123"/>
        <end position="126"/>
    </location>
</feature>
<feature type="helix" evidence="6">
    <location>
        <begin position="127"/>
        <end position="134"/>
    </location>
</feature>
<feature type="strand" evidence="6">
    <location>
        <begin position="137"/>
        <end position="143"/>
    </location>
</feature>
<feature type="helix" evidence="6">
    <location>
        <begin position="147"/>
        <end position="160"/>
    </location>
</feature>
<feature type="helix" evidence="6">
    <location>
        <begin position="165"/>
        <end position="168"/>
    </location>
</feature>
<feature type="strand" evidence="6">
    <location>
        <begin position="175"/>
        <end position="183"/>
    </location>
</feature>
<feature type="helix" evidence="6">
    <location>
        <begin position="185"/>
        <end position="189"/>
    </location>
</feature>
<feature type="helix" evidence="6">
    <location>
        <begin position="196"/>
        <end position="203"/>
    </location>
</feature>
<feature type="strand" evidence="6">
    <location>
        <begin position="205"/>
        <end position="212"/>
    </location>
</feature>
<feature type="helix" evidence="6">
    <location>
        <begin position="216"/>
        <end position="223"/>
    </location>
</feature>
<feature type="helix" evidence="6">
    <location>
        <begin position="227"/>
        <end position="229"/>
    </location>
</feature>
<feature type="helix" evidence="6">
    <location>
        <begin position="234"/>
        <end position="246"/>
    </location>
</feature>
<sequence length="270" mass="29614">MARIIVVTSGKGGVGKTTSSAAIATGLAQKGKKTVVIDFDIGLRNLDLIMGCERRVVYDFVNVIQGDATLNQALIKDKRTENLYILPASQTRDKDALTREGVAKVLDDLKAMDFEFIVCDSPAGIETGALMALYFADEAIITTNPEVSSVRDSDRILGILASKSRRAENGEEPIKEHLLLTRYNPGRVSRGDMLSMEDVLEILRIKLVGVIPEDQSVLRASNQGEPVILDINADAGKAYADTVERLLGEERPFRFIEEEKKGFLKRLFGG</sequence>